<evidence type="ECO:0000255" key="1">
    <source>
        <dbReference type="HAMAP-Rule" id="MF_01052"/>
    </source>
</evidence>
<name>CAIA_SALSV</name>
<protein>
    <recommendedName>
        <fullName evidence="1">Crotonobetainyl-CoA reductase</fullName>
        <ecNumber evidence="1">1.3.8.13</ecNumber>
    </recommendedName>
    <alternativeName>
        <fullName evidence="1">Crotonobetainyl-CoA dehydrogenase</fullName>
    </alternativeName>
</protein>
<proteinExistence type="inferred from homology"/>
<accession>B4TWR6</accession>
<feature type="chain" id="PRO_1000136285" description="Crotonobetainyl-CoA reductase">
    <location>
        <begin position="1"/>
        <end position="380"/>
    </location>
</feature>
<dbReference type="EC" id="1.3.8.13" evidence="1"/>
<dbReference type="EMBL" id="CP001127">
    <property type="protein sequence ID" value="ACF92959.1"/>
    <property type="molecule type" value="Genomic_DNA"/>
</dbReference>
<dbReference type="RefSeq" id="WP_000347134.1">
    <property type="nucleotide sequence ID" value="NC_011094.1"/>
</dbReference>
<dbReference type="SMR" id="B4TWR6"/>
<dbReference type="GeneID" id="44979088"/>
<dbReference type="KEGG" id="sew:SeSA_A0081"/>
<dbReference type="HOGENOM" id="CLU_018204_0_2_6"/>
<dbReference type="UniPathway" id="UPA00117"/>
<dbReference type="Proteomes" id="UP000001865">
    <property type="component" value="Chromosome"/>
</dbReference>
<dbReference type="GO" id="GO:0005737">
    <property type="term" value="C:cytoplasm"/>
    <property type="evidence" value="ECO:0007669"/>
    <property type="project" value="UniProtKB-SubCell"/>
</dbReference>
<dbReference type="GO" id="GO:0003995">
    <property type="term" value="F:acyl-CoA dehydrogenase activity"/>
    <property type="evidence" value="ECO:0007669"/>
    <property type="project" value="InterPro"/>
</dbReference>
<dbReference type="GO" id="GO:0050660">
    <property type="term" value="F:flavin adenine dinucleotide binding"/>
    <property type="evidence" value="ECO:0007669"/>
    <property type="project" value="InterPro"/>
</dbReference>
<dbReference type="GO" id="GO:0009437">
    <property type="term" value="P:carnitine metabolic process"/>
    <property type="evidence" value="ECO:0007669"/>
    <property type="project" value="UniProtKB-UniRule"/>
</dbReference>
<dbReference type="CDD" id="cd00567">
    <property type="entry name" value="ACAD"/>
    <property type="match status" value="1"/>
</dbReference>
<dbReference type="FunFam" id="1.20.140.10:FF:000001">
    <property type="entry name" value="Acyl-CoA dehydrogenase"/>
    <property type="match status" value="1"/>
</dbReference>
<dbReference type="FunFam" id="2.40.110.10:FF:000002">
    <property type="entry name" value="Acyl-CoA dehydrogenase fadE12"/>
    <property type="match status" value="1"/>
</dbReference>
<dbReference type="FunFam" id="1.10.540.10:FF:000005">
    <property type="entry name" value="Crotonobetainyl-CoA reductase"/>
    <property type="match status" value="1"/>
</dbReference>
<dbReference type="Gene3D" id="1.10.540.10">
    <property type="entry name" value="Acyl-CoA dehydrogenase/oxidase, N-terminal domain"/>
    <property type="match status" value="1"/>
</dbReference>
<dbReference type="Gene3D" id="2.40.110.10">
    <property type="entry name" value="Butyryl-CoA Dehydrogenase, subunit A, domain 2"/>
    <property type="match status" value="1"/>
</dbReference>
<dbReference type="Gene3D" id="1.20.140.10">
    <property type="entry name" value="Butyryl-CoA Dehydrogenase, subunit A, domain 3"/>
    <property type="match status" value="1"/>
</dbReference>
<dbReference type="HAMAP" id="MF_01052">
    <property type="entry name" value="CaiA"/>
    <property type="match status" value="1"/>
</dbReference>
<dbReference type="InterPro" id="IPR006089">
    <property type="entry name" value="Acyl-CoA_DH_CS"/>
</dbReference>
<dbReference type="InterPro" id="IPR006091">
    <property type="entry name" value="Acyl-CoA_Oxase/DH_mid-dom"/>
</dbReference>
<dbReference type="InterPro" id="IPR046373">
    <property type="entry name" value="Acyl-CoA_Oxase/DH_mid-dom_sf"/>
</dbReference>
<dbReference type="InterPro" id="IPR036250">
    <property type="entry name" value="AcylCo_DH-like_C"/>
</dbReference>
<dbReference type="InterPro" id="IPR009075">
    <property type="entry name" value="AcylCo_DH/oxidase_C"/>
</dbReference>
<dbReference type="InterPro" id="IPR013786">
    <property type="entry name" value="AcylCoA_DH/ox_N"/>
</dbReference>
<dbReference type="InterPro" id="IPR037069">
    <property type="entry name" value="AcylCoA_DH/ox_N_sf"/>
</dbReference>
<dbReference type="InterPro" id="IPR009100">
    <property type="entry name" value="AcylCoA_DH/oxidase_NM_dom_sf"/>
</dbReference>
<dbReference type="InterPro" id="IPR023450">
    <property type="entry name" value="CaiA"/>
</dbReference>
<dbReference type="NCBIfam" id="NF002885">
    <property type="entry name" value="PRK03354.1"/>
    <property type="match status" value="1"/>
</dbReference>
<dbReference type="PANTHER" id="PTHR43884">
    <property type="entry name" value="ACYL-COA DEHYDROGENASE"/>
    <property type="match status" value="1"/>
</dbReference>
<dbReference type="PANTHER" id="PTHR43884:SF12">
    <property type="entry name" value="ISOVALERYL-COA DEHYDROGENASE, MITOCHONDRIAL-RELATED"/>
    <property type="match status" value="1"/>
</dbReference>
<dbReference type="Pfam" id="PF00441">
    <property type="entry name" value="Acyl-CoA_dh_1"/>
    <property type="match status" value="1"/>
</dbReference>
<dbReference type="Pfam" id="PF02770">
    <property type="entry name" value="Acyl-CoA_dh_M"/>
    <property type="match status" value="1"/>
</dbReference>
<dbReference type="Pfam" id="PF02771">
    <property type="entry name" value="Acyl-CoA_dh_N"/>
    <property type="match status" value="1"/>
</dbReference>
<dbReference type="PIRSF" id="PIRSF016578">
    <property type="entry name" value="HsaA"/>
    <property type="match status" value="1"/>
</dbReference>
<dbReference type="SUPFAM" id="SSF47203">
    <property type="entry name" value="Acyl-CoA dehydrogenase C-terminal domain-like"/>
    <property type="match status" value="1"/>
</dbReference>
<dbReference type="SUPFAM" id="SSF56645">
    <property type="entry name" value="Acyl-CoA dehydrogenase NM domain-like"/>
    <property type="match status" value="1"/>
</dbReference>
<dbReference type="PROSITE" id="PS00072">
    <property type="entry name" value="ACYL_COA_DH_1"/>
    <property type="match status" value="1"/>
</dbReference>
<dbReference type="PROSITE" id="PS00073">
    <property type="entry name" value="ACYL_COA_DH_2"/>
    <property type="match status" value="1"/>
</dbReference>
<keyword id="KW-0963">Cytoplasm</keyword>
<keyword id="KW-0274">FAD</keyword>
<keyword id="KW-0285">Flavoprotein</keyword>
<keyword id="KW-0560">Oxidoreductase</keyword>
<reference key="1">
    <citation type="journal article" date="2011" name="J. Bacteriol.">
        <title>Comparative genomics of 28 Salmonella enterica isolates: evidence for CRISPR-mediated adaptive sublineage evolution.</title>
        <authorList>
            <person name="Fricke W.F."/>
            <person name="Mammel M.K."/>
            <person name="McDermott P.F."/>
            <person name="Tartera C."/>
            <person name="White D.G."/>
            <person name="Leclerc J.E."/>
            <person name="Ravel J."/>
            <person name="Cebula T.A."/>
        </authorList>
    </citation>
    <scope>NUCLEOTIDE SEQUENCE [LARGE SCALE GENOMIC DNA]</scope>
    <source>
        <strain>CVM19633</strain>
    </source>
</reference>
<organism>
    <name type="scientific">Salmonella schwarzengrund (strain CVM19633)</name>
    <dbReference type="NCBI Taxonomy" id="439843"/>
    <lineage>
        <taxon>Bacteria</taxon>
        <taxon>Pseudomonadati</taxon>
        <taxon>Pseudomonadota</taxon>
        <taxon>Gammaproteobacteria</taxon>
        <taxon>Enterobacterales</taxon>
        <taxon>Enterobacteriaceae</taxon>
        <taxon>Salmonella</taxon>
    </lineage>
</organism>
<comment type="function">
    <text evidence="1">Catalyzes the reduction of crotonobetainyl-CoA to gamma-butyrobetainyl-CoA.</text>
</comment>
<comment type="catalytic activity">
    <reaction evidence="1">
        <text>4-(trimethylamino)butanoyl-CoA + oxidized [electron-transfer flavoprotein] + H(+) = crotonobetainyl-CoA + reduced [electron-transfer flavoprotein]</text>
        <dbReference type="Rhea" id="RHEA:51584"/>
        <dbReference type="Rhea" id="RHEA-COMP:10685"/>
        <dbReference type="Rhea" id="RHEA-COMP:10686"/>
        <dbReference type="ChEBI" id="CHEBI:15378"/>
        <dbReference type="ChEBI" id="CHEBI:57692"/>
        <dbReference type="ChEBI" id="CHEBI:58307"/>
        <dbReference type="ChEBI" id="CHEBI:60933"/>
        <dbReference type="ChEBI" id="CHEBI:61513"/>
        <dbReference type="EC" id="1.3.8.13"/>
    </reaction>
</comment>
<comment type="cofactor">
    <cofactor evidence="1">
        <name>FAD</name>
        <dbReference type="ChEBI" id="CHEBI:57692"/>
    </cofactor>
</comment>
<comment type="pathway">
    <text evidence="1">Amine and polyamine metabolism; carnitine metabolism.</text>
</comment>
<comment type="subunit">
    <text evidence="1">Homotetramer.</text>
</comment>
<comment type="subcellular location">
    <subcellularLocation>
        <location evidence="1">Cytoplasm</location>
    </subcellularLocation>
</comment>
<comment type="similarity">
    <text evidence="1">Belongs to the acyl-CoA dehydrogenase family.</text>
</comment>
<sequence length="380" mass="42481">MDFNLNDEQELFVAGIRELMASENWEAYFAECDRDSVYPERFVKALADMGIDSLLIPEEHGGLEAGFVTVAAVWMELGRLGAPTYVLYQLPGGFNTFLREGTQEQIDKIMAFRGTGKQMWNSAITEPGAGSDVGSLKTTYTRKNGKVYLNGSKCFITSSAYTPYIVVMARDGASPDKPVYTEWFVDMSKAGIKVNKLEKLGLRMDSCCEITFDDVELDEKDMFGREGNGFNRVKEEFDHERFLVALTNYGTAMCAFEDAARYANQRVQFGEAIGRFQLIQEKFAHMAIKLNSMKNMLLEAAWKADNGTITSGDAAMCKYFCANAAFEVVDTAMQVLGGVGIAGNHRITRFWRDLRVDRVSGGSDEMQILTLGRAVLKQYR</sequence>
<gene>
    <name evidence="1" type="primary">caiA</name>
    <name type="ordered locus">SeSA_A0081</name>
</gene>